<gene>
    <name type="primary">PME32</name>
    <name type="synonym">ARATH32</name>
    <name type="ordered locus">At3g43270</name>
    <name type="ORF">F7K15.120</name>
</gene>
<keyword id="KW-0025">Alternative splicing</keyword>
<keyword id="KW-0063">Aspartyl esterase</keyword>
<keyword id="KW-0134">Cell wall</keyword>
<keyword id="KW-0961">Cell wall biogenesis/degradation</keyword>
<keyword id="KW-1015">Disulfide bond</keyword>
<keyword id="KW-0325">Glycoprotein</keyword>
<keyword id="KW-0378">Hydrolase</keyword>
<keyword id="KW-1185">Reference proteome</keyword>
<keyword id="KW-0964">Secreted</keyword>
<keyword id="KW-0732">Signal</keyword>
<protein>
    <recommendedName>
        <fullName>Probable pectinesterase/pectinesterase inhibitor 32</fullName>
    </recommendedName>
    <domain>
        <recommendedName>
            <fullName>Pectinesterase inhibitor 32</fullName>
        </recommendedName>
        <alternativeName>
            <fullName>Pectin methylesterase inhibitor 32</fullName>
        </alternativeName>
    </domain>
    <domain>
        <recommendedName>
            <fullName>Pectinesterase 32</fullName>
            <shortName>PE 32</shortName>
            <ecNumber>3.1.1.11</ecNumber>
        </recommendedName>
        <alternativeName>
            <fullName>Pectin methylesterase 32</fullName>
            <shortName>AtPME32</shortName>
        </alternativeName>
    </domain>
</protein>
<reference key="1">
    <citation type="journal article" date="2000" name="Nature">
        <title>Sequence and analysis of chromosome 3 of the plant Arabidopsis thaliana.</title>
        <authorList>
            <person name="Salanoubat M."/>
            <person name="Lemcke K."/>
            <person name="Rieger M."/>
            <person name="Ansorge W."/>
            <person name="Unseld M."/>
            <person name="Fartmann B."/>
            <person name="Valle G."/>
            <person name="Bloecker H."/>
            <person name="Perez-Alonso M."/>
            <person name="Obermaier B."/>
            <person name="Delseny M."/>
            <person name="Boutry M."/>
            <person name="Grivell L.A."/>
            <person name="Mache R."/>
            <person name="Puigdomenech P."/>
            <person name="De Simone V."/>
            <person name="Choisne N."/>
            <person name="Artiguenave F."/>
            <person name="Robert C."/>
            <person name="Brottier P."/>
            <person name="Wincker P."/>
            <person name="Cattolico L."/>
            <person name="Weissenbach J."/>
            <person name="Saurin W."/>
            <person name="Quetier F."/>
            <person name="Schaefer M."/>
            <person name="Mueller-Auer S."/>
            <person name="Gabel C."/>
            <person name="Fuchs M."/>
            <person name="Benes V."/>
            <person name="Wurmbach E."/>
            <person name="Drzonek H."/>
            <person name="Erfle H."/>
            <person name="Jordan N."/>
            <person name="Bangert S."/>
            <person name="Wiedelmann R."/>
            <person name="Kranz H."/>
            <person name="Voss H."/>
            <person name="Holland R."/>
            <person name="Brandt P."/>
            <person name="Nyakatura G."/>
            <person name="Vezzi A."/>
            <person name="D'Angelo M."/>
            <person name="Pallavicini A."/>
            <person name="Toppo S."/>
            <person name="Simionati B."/>
            <person name="Conrad A."/>
            <person name="Hornischer K."/>
            <person name="Kauer G."/>
            <person name="Loehnert T.-H."/>
            <person name="Nordsiek G."/>
            <person name="Reichelt J."/>
            <person name="Scharfe M."/>
            <person name="Schoen O."/>
            <person name="Bargues M."/>
            <person name="Terol J."/>
            <person name="Climent J."/>
            <person name="Navarro P."/>
            <person name="Collado C."/>
            <person name="Perez-Perez A."/>
            <person name="Ottenwaelder B."/>
            <person name="Duchemin D."/>
            <person name="Cooke R."/>
            <person name="Laudie M."/>
            <person name="Berger-Llauro C."/>
            <person name="Purnelle B."/>
            <person name="Masuy D."/>
            <person name="de Haan M."/>
            <person name="Maarse A.C."/>
            <person name="Alcaraz J.-P."/>
            <person name="Cottet A."/>
            <person name="Casacuberta E."/>
            <person name="Monfort A."/>
            <person name="Argiriou A."/>
            <person name="Flores M."/>
            <person name="Liguori R."/>
            <person name="Vitale D."/>
            <person name="Mannhaupt G."/>
            <person name="Haase D."/>
            <person name="Schoof H."/>
            <person name="Rudd S."/>
            <person name="Zaccaria P."/>
            <person name="Mewes H.-W."/>
            <person name="Mayer K.F.X."/>
            <person name="Kaul S."/>
            <person name="Town C.D."/>
            <person name="Koo H.L."/>
            <person name="Tallon L.J."/>
            <person name="Jenkins J."/>
            <person name="Rooney T."/>
            <person name="Rizzo M."/>
            <person name="Walts A."/>
            <person name="Utterback T."/>
            <person name="Fujii C.Y."/>
            <person name="Shea T.P."/>
            <person name="Creasy T.H."/>
            <person name="Haas B."/>
            <person name="Maiti R."/>
            <person name="Wu D."/>
            <person name="Peterson J."/>
            <person name="Van Aken S."/>
            <person name="Pai G."/>
            <person name="Militscher J."/>
            <person name="Sellers P."/>
            <person name="Gill J.E."/>
            <person name="Feldblyum T.V."/>
            <person name="Preuss D."/>
            <person name="Lin X."/>
            <person name="Nierman W.C."/>
            <person name="Salzberg S.L."/>
            <person name="White O."/>
            <person name="Venter J.C."/>
            <person name="Fraser C.M."/>
            <person name="Kaneko T."/>
            <person name="Nakamura Y."/>
            <person name="Sato S."/>
            <person name="Kato T."/>
            <person name="Asamizu E."/>
            <person name="Sasamoto S."/>
            <person name="Kimura T."/>
            <person name="Idesawa K."/>
            <person name="Kawashima K."/>
            <person name="Kishida Y."/>
            <person name="Kiyokawa C."/>
            <person name="Kohara M."/>
            <person name="Matsumoto M."/>
            <person name="Matsuno A."/>
            <person name="Muraki A."/>
            <person name="Nakayama S."/>
            <person name="Nakazaki N."/>
            <person name="Shinpo S."/>
            <person name="Takeuchi C."/>
            <person name="Wada T."/>
            <person name="Watanabe A."/>
            <person name="Yamada M."/>
            <person name="Yasuda M."/>
            <person name="Tabata S."/>
        </authorList>
    </citation>
    <scope>NUCLEOTIDE SEQUENCE [LARGE SCALE GENOMIC DNA]</scope>
    <source>
        <strain>cv. Columbia</strain>
    </source>
</reference>
<reference key="2">
    <citation type="journal article" date="2017" name="Plant J.">
        <title>Araport11: a complete reannotation of the Arabidopsis thaliana reference genome.</title>
        <authorList>
            <person name="Cheng C.Y."/>
            <person name="Krishnakumar V."/>
            <person name="Chan A.P."/>
            <person name="Thibaud-Nissen F."/>
            <person name="Schobel S."/>
            <person name="Town C.D."/>
        </authorList>
    </citation>
    <scope>GENOME REANNOTATION</scope>
    <source>
        <strain>cv. Columbia</strain>
    </source>
</reference>
<reference key="3">
    <citation type="journal article" date="2003" name="Science">
        <title>Empirical analysis of transcriptional activity in the Arabidopsis genome.</title>
        <authorList>
            <person name="Yamada K."/>
            <person name="Lim J."/>
            <person name="Dale J.M."/>
            <person name="Chen H."/>
            <person name="Shinn P."/>
            <person name="Palm C.J."/>
            <person name="Southwick A.M."/>
            <person name="Wu H.C."/>
            <person name="Kim C.J."/>
            <person name="Nguyen M."/>
            <person name="Pham P.K."/>
            <person name="Cheuk R.F."/>
            <person name="Karlin-Newmann G."/>
            <person name="Liu S.X."/>
            <person name="Lam B."/>
            <person name="Sakano H."/>
            <person name="Wu T."/>
            <person name="Yu G."/>
            <person name="Miranda M."/>
            <person name="Quach H.L."/>
            <person name="Tripp M."/>
            <person name="Chang C.H."/>
            <person name="Lee J.M."/>
            <person name="Toriumi M.J."/>
            <person name="Chan M.M."/>
            <person name="Tang C.C."/>
            <person name="Onodera C.S."/>
            <person name="Deng J.M."/>
            <person name="Akiyama K."/>
            <person name="Ansari Y."/>
            <person name="Arakawa T."/>
            <person name="Banh J."/>
            <person name="Banno F."/>
            <person name="Bowser L."/>
            <person name="Brooks S.Y."/>
            <person name="Carninci P."/>
            <person name="Chao Q."/>
            <person name="Choy N."/>
            <person name="Enju A."/>
            <person name="Goldsmith A.D."/>
            <person name="Gurjal M."/>
            <person name="Hansen N.F."/>
            <person name="Hayashizaki Y."/>
            <person name="Johnson-Hopson C."/>
            <person name="Hsuan V.W."/>
            <person name="Iida K."/>
            <person name="Karnes M."/>
            <person name="Khan S."/>
            <person name="Koesema E."/>
            <person name="Ishida J."/>
            <person name="Jiang P.X."/>
            <person name="Jones T."/>
            <person name="Kawai J."/>
            <person name="Kamiya A."/>
            <person name="Meyers C."/>
            <person name="Nakajima M."/>
            <person name="Narusaka M."/>
            <person name="Seki M."/>
            <person name="Sakurai T."/>
            <person name="Satou M."/>
            <person name="Tamse R."/>
            <person name="Vaysberg M."/>
            <person name="Wallender E.K."/>
            <person name="Wong C."/>
            <person name="Yamamura Y."/>
            <person name="Yuan S."/>
            <person name="Shinozaki K."/>
            <person name="Davis R.W."/>
            <person name="Theologis A."/>
            <person name="Ecker J.R."/>
        </authorList>
    </citation>
    <scope>NUCLEOTIDE SEQUENCE [LARGE SCALE MRNA] (ISOFORMS 1 AND 2)</scope>
    <source>
        <strain>cv. Columbia</strain>
    </source>
</reference>
<reference key="4">
    <citation type="journal article" date="2004" name="Carbohydr. Res.">
        <title>Pectin methylesterases: sequence-structural features and phylogenetic relationships.</title>
        <authorList>
            <person name="Markovic O."/>
            <person name="Janecek S."/>
        </authorList>
    </citation>
    <scope>GENE FAMILY</scope>
    <scope>NOMENCLATURE</scope>
</reference>
<reference key="5">
    <citation type="journal article" date="2006" name="Planta">
        <title>Comprehensive expression profiling of the pectin methylesterase gene family during silique development in Arabidopsis thaliana.</title>
        <authorList>
            <person name="Louvet R."/>
            <person name="Cavel E."/>
            <person name="Gutierrez L."/>
            <person name="Guenin S."/>
            <person name="Roger D."/>
            <person name="Gillet F."/>
            <person name="Guerineau F."/>
            <person name="Pelloux J."/>
        </authorList>
    </citation>
    <scope>TISSUE SPECIFICITY</scope>
    <scope>DEVELOPMENTAL STAGE</scope>
</reference>
<name>PME32_ARATH</name>
<feature type="signal peptide" evidence="2">
    <location>
        <begin position="1"/>
        <end position="24"/>
    </location>
</feature>
<feature type="chain" id="PRO_0000371684" description="Probable pectinesterase/pectinesterase inhibitor 32">
    <location>
        <begin position="25"/>
        <end position="527"/>
    </location>
</feature>
<feature type="region of interest" description="Pectinesterase inhibitor 32">
    <location>
        <begin position="25"/>
        <end position="165"/>
    </location>
</feature>
<feature type="region of interest" description="Pectinesterase 32">
    <location>
        <begin position="214"/>
        <end position="511"/>
    </location>
</feature>
<feature type="active site" description="Proton donor; for pectinesterase activity" evidence="3">
    <location>
        <position position="342"/>
    </location>
</feature>
<feature type="active site" description="Nucleophile; for pectinesterase activity" evidence="3">
    <location>
        <position position="363"/>
    </location>
</feature>
<feature type="binding site" evidence="1">
    <location>
        <position position="289"/>
    </location>
    <ligand>
        <name>substrate</name>
        <note>for pectinesterase activity</note>
    </ligand>
</feature>
<feature type="binding site" evidence="1">
    <location>
        <position position="319"/>
    </location>
    <ligand>
        <name>substrate</name>
        <note>for pectinesterase activity</note>
    </ligand>
</feature>
<feature type="binding site" evidence="1">
    <location>
        <position position="431"/>
    </location>
    <ligand>
        <name>substrate</name>
        <note>for pectinesterase activity</note>
    </ligand>
</feature>
<feature type="binding site" evidence="1">
    <location>
        <position position="433"/>
    </location>
    <ligand>
        <name>substrate</name>
        <note>for pectinesterase activity</note>
    </ligand>
</feature>
<feature type="site" description="Transition state stabilizer" evidence="1">
    <location>
        <position position="341"/>
    </location>
</feature>
<feature type="glycosylation site" description="N-linked (GlcNAc...) asparagine" evidence="2">
    <location>
        <position position="110"/>
    </location>
</feature>
<feature type="glycosylation site" description="N-linked (GlcNAc...) asparagine" evidence="2">
    <location>
        <position position="209"/>
    </location>
</feature>
<feature type="glycosylation site" description="N-linked (GlcNAc...) asparagine" evidence="2">
    <location>
        <position position="224"/>
    </location>
</feature>
<feature type="glycosylation site" description="N-linked (GlcNAc...) asparagine" evidence="2">
    <location>
        <position position="280"/>
    </location>
</feature>
<feature type="glycosylation site" description="N-linked (GlcNAc...) asparagine" evidence="2">
    <location>
        <position position="423"/>
    </location>
</feature>
<feature type="glycosylation site" description="N-linked (GlcNAc...) asparagine" evidence="2">
    <location>
        <position position="494"/>
    </location>
</feature>
<feature type="glycosylation site" description="N-linked (GlcNAc...) asparagine" evidence="2">
    <location>
        <position position="501"/>
    </location>
</feature>
<feature type="disulfide bond" evidence="1">
    <location>
        <begin position="356"/>
        <end position="376"/>
    </location>
</feature>
<feature type="splice variant" id="VSP_037089" description="In isoform 2." evidence="5">
    <original>AVSGRGFIAR</original>
    <variation>GKSKFIISFT</variation>
    <location>
        <begin position="296"/>
        <end position="305"/>
    </location>
</feature>
<feature type="splice variant" id="VSP_037090" description="In isoform 2." evidence="5">
    <location>
        <begin position="306"/>
        <end position="527"/>
    </location>
</feature>
<organism>
    <name type="scientific">Arabidopsis thaliana</name>
    <name type="common">Mouse-ear cress</name>
    <dbReference type="NCBI Taxonomy" id="3702"/>
    <lineage>
        <taxon>Eukaryota</taxon>
        <taxon>Viridiplantae</taxon>
        <taxon>Streptophyta</taxon>
        <taxon>Embryophyta</taxon>
        <taxon>Tracheophyta</taxon>
        <taxon>Spermatophyta</taxon>
        <taxon>Magnoliopsida</taxon>
        <taxon>eudicotyledons</taxon>
        <taxon>Gunneridae</taxon>
        <taxon>Pentapetalae</taxon>
        <taxon>rosids</taxon>
        <taxon>malvids</taxon>
        <taxon>Brassicales</taxon>
        <taxon>Brassicaceae</taxon>
        <taxon>Camelineae</taxon>
        <taxon>Arabidopsis</taxon>
    </lineage>
</organism>
<sequence>MAKFRQMGSSIFFLFLIIISLCSAHKEAFSSTDLVQMECLRVPPLEFAEAAKTVVDAITKAVAIVSKFDKKAGKSRVSNAIVDCVDLLDSAAEELSWIISASQSPNGKDNSTGDVGSDLRTWISAALSNQDTCLDGFEGTNGIIKKIVAGGLSKVGTTVRNLLTMVHSPPSKPKPKPIKAQTMTKAHSGFSKFPSWVKPGDRKLLQTDNITVADAVVAADGTGNFTTISDAVLAAPDYSTKRYVIHVKRGVYVENVEIKKKKWNIMMVGDGIDATVITGNRSFIDGWTTFRSATFAVSGRGFIARDITFQNTAGPEKHQAVAIRSDTDLGVFYRCAMRGYQDTLYAHSMRQFFRECIITGTVDFIFGDATAVFQSCQIKAKQGLPNQKNSITAQGRKDPNEPTGFTIQFSNIAADTDLLLNLNTTATYLGRPWKLYSRTVFMQNYMSDAINPVGWLEWNGNFALDTLYYGEYMNSGPGASLDRRVKWPGYHVLNTSAEANNFTVSQLIQGNLWLPSTGITFIAGLVS</sequence>
<evidence type="ECO:0000250" key="1"/>
<evidence type="ECO:0000255" key="2"/>
<evidence type="ECO:0000255" key="3">
    <source>
        <dbReference type="PROSITE-ProRule" id="PRU10040"/>
    </source>
</evidence>
<evidence type="ECO:0000269" key="4">
    <source>
    </source>
</evidence>
<evidence type="ECO:0000303" key="5">
    <source>
    </source>
</evidence>
<evidence type="ECO:0000305" key="6"/>
<comment type="function">
    <text evidence="1">Acts in the modification of cell walls via demethylesterification of cell wall pectin.</text>
</comment>
<comment type="catalytic activity">
    <reaction>
        <text>[(1-&gt;4)-alpha-D-galacturonosyl methyl ester](n) + n H2O = [(1-&gt;4)-alpha-D-galacturonosyl](n) + n methanol + n H(+)</text>
        <dbReference type="Rhea" id="RHEA:22380"/>
        <dbReference type="Rhea" id="RHEA-COMP:14570"/>
        <dbReference type="Rhea" id="RHEA-COMP:14573"/>
        <dbReference type="ChEBI" id="CHEBI:15377"/>
        <dbReference type="ChEBI" id="CHEBI:15378"/>
        <dbReference type="ChEBI" id="CHEBI:17790"/>
        <dbReference type="ChEBI" id="CHEBI:140522"/>
        <dbReference type="ChEBI" id="CHEBI:140523"/>
        <dbReference type="EC" id="3.1.1.11"/>
    </reaction>
</comment>
<comment type="pathway">
    <text>Glycan metabolism; pectin degradation; 2-dehydro-3-deoxy-D-gluconate from pectin: step 1/5.</text>
</comment>
<comment type="subcellular location">
    <subcellularLocation>
        <location evidence="1">Secreted</location>
        <location evidence="1">Cell wall</location>
    </subcellularLocation>
</comment>
<comment type="alternative products">
    <event type="alternative splicing"/>
    <isoform>
        <id>Q9LXK7-1</id>
        <name>1</name>
        <sequence type="displayed"/>
    </isoform>
    <isoform>
        <id>Q9LXK7-2</id>
        <name>2</name>
        <sequence type="described" ref="VSP_037089 VSP_037090"/>
    </isoform>
</comment>
<comment type="tissue specificity">
    <text evidence="4">Expressed in siliques.</text>
</comment>
<comment type="developmental stage">
    <text evidence="4">Expressed during late developmental phases of siliques.</text>
</comment>
<comment type="miscellaneous">
    <text>The PMEI region may act as an autoinhibitory domain and prevent untimely PME activity during transport.</text>
</comment>
<comment type="similarity">
    <text evidence="6">In the N-terminal section; belongs to the PMEI family.</text>
</comment>
<comment type="similarity">
    <text evidence="6">In the C-terminal section; belongs to the pectinesterase family.</text>
</comment>
<accession>Q9LXK7</accession>
<accession>Q8VZ27</accession>
<dbReference type="EC" id="3.1.1.11"/>
<dbReference type="EMBL" id="AL353871">
    <property type="protein sequence ID" value="CAB89048.1"/>
    <property type="molecule type" value="Genomic_DNA"/>
</dbReference>
<dbReference type="EMBL" id="CP002686">
    <property type="protein sequence ID" value="AEE77781.1"/>
    <property type="molecule type" value="Genomic_DNA"/>
</dbReference>
<dbReference type="EMBL" id="AY070071">
    <property type="protein sequence ID" value="AAL49828.1"/>
    <property type="molecule type" value="mRNA"/>
</dbReference>
<dbReference type="EMBL" id="AY096694">
    <property type="protein sequence ID" value="AAM20328.1"/>
    <property type="molecule type" value="mRNA"/>
</dbReference>
<dbReference type="EMBL" id="AY065349">
    <property type="protein sequence ID" value="AAL38790.1"/>
    <property type="molecule type" value="mRNA"/>
</dbReference>
<dbReference type="EMBL" id="AY096720">
    <property type="protein sequence ID" value="AAM20354.1"/>
    <property type="molecule type" value="mRNA"/>
</dbReference>
<dbReference type="PIR" id="T49241">
    <property type="entry name" value="T49241"/>
</dbReference>
<dbReference type="RefSeq" id="NP_189913.3">
    <molecule id="Q9LXK7-1"/>
    <property type="nucleotide sequence ID" value="NM_114195.4"/>
</dbReference>
<dbReference type="SMR" id="Q9LXK7"/>
<dbReference type="FunCoup" id="Q9LXK7">
    <property type="interactions" value="136"/>
</dbReference>
<dbReference type="STRING" id="3702.Q9LXK7"/>
<dbReference type="GlyCosmos" id="Q9LXK7">
    <property type="glycosylation" value="7 sites, No reported glycans"/>
</dbReference>
<dbReference type="GlyGen" id="Q9LXK7">
    <property type="glycosylation" value="7 sites"/>
</dbReference>
<dbReference type="iPTMnet" id="Q9LXK7"/>
<dbReference type="PaxDb" id="3702-AT3G43270.1"/>
<dbReference type="ProteomicsDB" id="226208">
    <molecule id="Q9LXK7-1"/>
</dbReference>
<dbReference type="EnsemblPlants" id="AT3G43270.1">
    <molecule id="Q9LXK7-1"/>
    <property type="protein sequence ID" value="AT3G43270.1"/>
    <property type="gene ID" value="AT3G43270"/>
</dbReference>
<dbReference type="GeneID" id="823402"/>
<dbReference type="Gramene" id="AT3G43270.1">
    <molecule id="Q9LXK7-1"/>
    <property type="protein sequence ID" value="AT3G43270.1"/>
    <property type="gene ID" value="AT3G43270"/>
</dbReference>
<dbReference type="KEGG" id="ath:AT3G43270"/>
<dbReference type="Araport" id="AT3G43270"/>
<dbReference type="TAIR" id="AT3G43270"/>
<dbReference type="eggNOG" id="ENOG502QRGV">
    <property type="taxonomic scope" value="Eukaryota"/>
</dbReference>
<dbReference type="HOGENOM" id="CLU_012243_9_1_1"/>
<dbReference type="InParanoid" id="Q9LXK7"/>
<dbReference type="OMA" id="SAHKEAF"/>
<dbReference type="PhylomeDB" id="Q9LXK7"/>
<dbReference type="BioCyc" id="ARA:AT3G43270-MONOMER"/>
<dbReference type="UniPathway" id="UPA00545">
    <property type="reaction ID" value="UER00823"/>
</dbReference>
<dbReference type="PRO" id="PR:Q9LXK7"/>
<dbReference type="Proteomes" id="UP000006548">
    <property type="component" value="Chromosome 3"/>
</dbReference>
<dbReference type="ExpressionAtlas" id="Q9LXK7">
    <property type="expression patterns" value="baseline and differential"/>
</dbReference>
<dbReference type="GO" id="GO:0005576">
    <property type="term" value="C:extracellular region"/>
    <property type="evidence" value="ECO:0007669"/>
    <property type="project" value="UniProtKB-KW"/>
</dbReference>
<dbReference type="GO" id="GO:0004857">
    <property type="term" value="F:enzyme inhibitor activity"/>
    <property type="evidence" value="ECO:0007669"/>
    <property type="project" value="InterPro"/>
</dbReference>
<dbReference type="GO" id="GO:0030599">
    <property type="term" value="F:pectinesterase activity"/>
    <property type="evidence" value="ECO:0007669"/>
    <property type="project" value="UniProtKB-EC"/>
</dbReference>
<dbReference type="GO" id="GO:0042545">
    <property type="term" value="P:cell wall modification"/>
    <property type="evidence" value="ECO:0007669"/>
    <property type="project" value="InterPro"/>
</dbReference>
<dbReference type="GO" id="GO:0045490">
    <property type="term" value="P:pectin catabolic process"/>
    <property type="evidence" value="ECO:0007669"/>
    <property type="project" value="UniProtKB-UniPathway"/>
</dbReference>
<dbReference type="CDD" id="cd15799">
    <property type="entry name" value="PMEI-like_4"/>
    <property type="match status" value="1"/>
</dbReference>
<dbReference type="FunFam" id="1.20.140.40:FF:000020">
    <property type="entry name" value="Pectinesterase"/>
    <property type="match status" value="1"/>
</dbReference>
<dbReference type="FunFam" id="2.160.20.10:FF:000001">
    <property type="entry name" value="Pectinesterase"/>
    <property type="match status" value="1"/>
</dbReference>
<dbReference type="Gene3D" id="1.20.140.40">
    <property type="entry name" value="Invertase/pectin methylesterase inhibitor family protein"/>
    <property type="match status" value="1"/>
</dbReference>
<dbReference type="Gene3D" id="2.160.20.10">
    <property type="entry name" value="Single-stranded right-handed beta-helix, Pectin lyase-like"/>
    <property type="match status" value="1"/>
</dbReference>
<dbReference type="InterPro" id="IPR035513">
    <property type="entry name" value="Invertase/methylesterase_inhib"/>
</dbReference>
<dbReference type="InterPro" id="IPR012334">
    <property type="entry name" value="Pectin_lyas_fold"/>
</dbReference>
<dbReference type="InterPro" id="IPR011050">
    <property type="entry name" value="Pectin_lyase_fold/virulence"/>
</dbReference>
<dbReference type="InterPro" id="IPR033131">
    <property type="entry name" value="Pectinesterase_Asp_AS"/>
</dbReference>
<dbReference type="InterPro" id="IPR000070">
    <property type="entry name" value="Pectinesterase_cat"/>
</dbReference>
<dbReference type="InterPro" id="IPR006501">
    <property type="entry name" value="Pectinesterase_inhib_dom"/>
</dbReference>
<dbReference type="InterPro" id="IPR018040">
    <property type="entry name" value="Pectinesterase_Tyr_AS"/>
</dbReference>
<dbReference type="NCBIfam" id="TIGR01614">
    <property type="entry name" value="PME_inhib"/>
    <property type="match status" value="1"/>
</dbReference>
<dbReference type="PANTHER" id="PTHR31707">
    <property type="entry name" value="PECTINESTERASE"/>
    <property type="match status" value="1"/>
</dbReference>
<dbReference type="Pfam" id="PF01095">
    <property type="entry name" value="Pectinesterase"/>
    <property type="match status" value="1"/>
</dbReference>
<dbReference type="Pfam" id="PF04043">
    <property type="entry name" value="PMEI"/>
    <property type="match status" value="1"/>
</dbReference>
<dbReference type="SMART" id="SM00856">
    <property type="entry name" value="PMEI"/>
    <property type="match status" value="1"/>
</dbReference>
<dbReference type="SUPFAM" id="SSF51126">
    <property type="entry name" value="Pectin lyase-like"/>
    <property type="match status" value="1"/>
</dbReference>
<dbReference type="SUPFAM" id="SSF101148">
    <property type="entry name" value="Plant invertase/pectin methylesterase inhibitor"/>
    <property type="match status" value="1"/>
</dbReference>
<dbReference type="PROSITE" id="PS00800">
    <property type="entry name" value="PECTINESTERASE_1"/>
    <property type="match status" value="1"/>
</dbReference>
<dbReference type="PROSITE" id="PS00503">
    <property type="entry name" value="PECTINESTERASE_2"/>
    <property type="match status" value="1"/>
</dbReference>
<proteinExistence type="evidence at transcript level"/>